<reference key="1">
    <citation type="journal article" date="2003" name="Proc. Natl. Acad. Sci. U.S.A.">
        <title>The complete genome sequence of the carcinogenic bacterium Helicobacter hepaticus.</title>
        <authorList>
            <person name="Suerbaum S."/>
            <person name="Josenhans C."/>
            <person name="Sterzenbach T."/>
            <person name="Drescher B."/>
            <person name="Brandt P."/>
            <person name="Bell M."/>
            <person name="Droege M."/>
            <person name="Fartmann B."/>
            <person name="Fischer H.-P."/>
            <person name="Ge Z."/>
            <person name="Hoerster A."/>
            <person name="Holland R."/>
            <person name="Klein K."/>
            <person name="Koenig J."/>
            <person name="Macko L."/>
            <person name="Mendz G.L."/>
            <person name="Nyakatura G."/>
            <person name="Schauer D.B."/>
            <person name="Shen Z."/>
            <person name="Weber J."/>
            <person name="Frosch M."/>
            <person name="Fox J.G."/>
        </authorList>
    </citation>
    <scope>NUCLEOTIDE SEQUENCE [LARGE SCALE GENOMIC DNA]</scope>
    <source>
        <strain>ATCC 51449 / 3B1</strain>
    </source>
</reference>
<evidence type="ECO:0000255" key="1">
    <source>
        <dbReference type="HAMAP-Rule" id="MF_01328"/>
    </source>
</evidence>
<evidence type="ECO:0000256" key="2">
    <source>
        <dbReference type="SAM" id="MobiDB-lite"/>
    </source>
</evidence>
<evidence type="ECO:0000305" key="3"/>
<gene>
    <name evidence="1" type="primary">rplD</name>
    <name type="ordered locus">HH_1379</name>
</gene>
<sequence>MSKAILLDKKLQQSNELALPERYAQIKEHNLYLYVKSYLSSLRANSASAKKRGEVSGGGKKPWKQKGGGRARAGSITSPVFVGGGVSHGPSNDKNYTLKINKKQKRLALECALFQKAQEGKLFVVDSLAMPSGKTKDAYAMFKALKQRSTLFVAQMSDEPTFLAFRNLQQCYLADANELNAYLVAAFRSVVIEKAVFDEIIAEKKGE</sequence>
<proteinExistence type="inferred from homology"/>
<protein>
    <recommendedName>
        <fullName evidence="1">Large ribosomal subunit protein uL4</fullName>
    </recommendedName>
    <alternativeName>
        <fullName evidence="3">50S ribosomal protein L4</fullName>
    </alternativeName>
</protein>
<organism>
    <name type="scientific">Helicobacter hepaticus (strain ATCC 51449 / 3B1)</name>
    <dbReference type="NCBI Taxonomy" id="235279"/>
    <lineage>
        <taxon>Bacteria</taxon>
        <taxon>Pseudomonadati</taxon>
        <taxon>Campylobacterota</taxon>
        <taxon>Epsilonproteobacteria</taxon>
        <taxon>Campylobacterales</taxon>
        <taxon>Helicobacteraceae</taxon>
        <taxon>Helicobacter</taxon>
    </lineage>
</organism>
<accession>Q7VGE3</accession>
<keyword id="KW-1185">Reference proteome</keyword>
<keyword id="KW-0687">Ribonucleoprotein</keyword>
<keyword id="KW-0689">Ribosomal protein</keyword>
<keyword id="KW-0694">RNA-binding</keyword>
<keyword id="KW-0699">rRNA-binding</keyword>
<name>RL4_HELHP</name>
<dbReference type="EMBL" id="AE017125">
    <property type="protein sequence ID" value="AAP77976.1"/>
    <property type="molecule type" value="Genomic_DNA"/>
</dbReference>
<dbReference type="RefSeq" id="WP_011116219.1">
    <property type="nucleotide sequence ID" value="NC_004917.1"/>
</dbReference>
<dbReference type="SMR" id="Q7VGE3"/>
<dbReference type="STRING" id="235279.HH_1379"/>
<dbReference type="KEGG" id="hhe:HH_1379"/>
<dbReference type="eggNOG" id="COG0088">
    <property type="taxonomic scope" value="Bacteria"/>
</dbReference>
<dbReference type="HOGENOM" id="CLU_041575_5_2_7"/>
<dbReference type="OrthoDB" id="9803201at2"/>
<dbReference type="Proteomes" id="UP000002495">
    <property type="component" value="Chromosome"/>
</dbReference>
<dbReference type="GO" id="GO:1990904">
    <property type="term" value="C:ribonucleoprotein complex"/>
    <property type="evidence" value="ECO:0007669"/>
    <property type="project" value="UniProtKB-KW"/>
</dbReference>
<dbReference type="GO" id="GO:0005840">
    <property type="term" value="C:ribosome"/>
    <property type="evidence" value="ECO:0007669"/>
    <property type="project" value="UniProtKB-KW"/>
</dbReference>
<dbReference type="GO" id="GO:0019843">
    <property type="term" value="F:rRNA binding"/>
    <property type="evidence" value="ECO:0007669"/>
    <property type="project" value="UniProtKB-UniRule"/>
</dbReference>
<dbReference type="GO" id="GO:0003735">
    <property type="term" value="F:structural constituent of ribosome"/>
    <property type="evidence" value="ECO:0007669"/>
    <property type="project" value="InterPro"/>
</dbReference>
<dbReference type="GO" id="GO:0006412">
    <property type="term" value="P:translation"/>
    <property type="evidence" value="ECO:0007669"/>
    <property type="project" value="UniProtKB-UniRule"/>
</dbReference>
<dbReference type="FunFam" id="3.40.1370.10:FF:000008">
    <property type="entry name" value="50S ribosomal protein L4"/>
    <property type="match status" value="1"/>
</dbReference>
<dbReference type="Gene3D" id="3.40.1370.10">
    <property type="match status" value="1"/>
</dbReference>
<dbReference type="HAMAP" id="MF_01328_B">
    <property type="entry name" value="Ribosomal_uL4_B"/>
    <property type="match status" value="1"/>
</dbReference>
<dbReference type="InterPro" id="IPR002136">
    <property type="entry name" value="Ribosomal_uL4"/>
</dbReference>
<dbReference type="InterPro" id="IPR013005">
    <property type="entry name" value="Ribosomal_uL4-like"/>
</dbReference>
<dbReference type="InterPro" id="IPR023574">
    <property type="entry name" value="Ribosomal_uL4_dom_sf"/>
</dbReference>
<dbReference type="NCBIfam" id="TIGR03953">
    <property type="entry name" value="rplD_bact"/>
    <property type="match status" value="1"/>
</dbReference>
<dbReference type="PANTHER" id="PTHR10746">
    <property type="entry name" value="50S RIBOSOMAL PROTEIN L4"/>
    <property type="match status" value="1"/>
</dbReference>
<dbReference type="PANTHER" id="PTHR10746:SF6">
    <property type="entry name" value="LARGE RIBOSOMAL SUBUNIT PROTEIN UL4M"/>
    <property type="match status" value="1"/>
</dbReference>
<dbReference type="Pfam" id="PF00573">
    <property type="entry name" value="Ribosomal_L4"/>
    <property type="match status" value="1"/>
</dbReference>
<dbReference type="SUPFAM" id="SSF52166">
    <property type="entry name" value="Ribosomal protein L4"/>
    <property type="match status" value="1"/>
</dbReference>
<feature type="chain" id="PRO_0000129224" description="Large ribosomal subunit protein uL4">
    <location>
        <begin position="1"/>
        <end position="207"/>
    </location>
</feature>
<feature type="region of interest" description="Disordered" evidence="2">
    <location>
        <begin position="49"/>
        <end position="73"/>
    </location>
</feature>
<comment type="function">
    <text evidence="1">One of the primary rRNA binding proteins, this protein initially binds near the 5'-end of the 23S rRNA. It is important during the early stages of 50S assembly. It makes multiple contacts with different domains of the 23S rRNA in the assembled 50S subunit and ribosome.</text>
</comment>
<comment type="function">
    <text evidence="1">Forms part of the polypeptide exit tunnel.</text>
</comment>
<comment type="subunit">
    <text evidence="1">Part of the 50S ribosomal subunit.</text>
</comment>
<comment type="similarity">
    <text evidence="1">Belongs to the universal ribosomal protein uL4 family.</text>
</comment>